<reference key="1">
    <citation type="submission" date="2007-07" db="EMBL/GenBank/DDBJ databases">
        <title>Complete genome sequence of Campylobacter jejuni subsp doylei 269.97 isolated from human blood.</title>
        <authorList>
            <person name="Fouts D.E."/>
            <person name="Mongodin E.F."/>
            <person name="Puiu D."/>
            <person name="Sebastian Y."/>
            <person name="Miller W.G."/>
            <person name="Mandrell R.E."/>
            <person name="Lastovica A.J."/>
            <person name="Nelson K.E."/>
        </authorList>
    </citation>
    <scope>NUCLEOTIDE SEQUENCE [LARGE SCALE GENOMIC DNA]</scope>
    <source>
        <strain>ATCC BAA-1458 / RM4099 / 269.97</strain>
    </source>
</reference>
<comment type="function">
    <text evidence="1">Involved in the gluconeogenesis. Catalyzes the conversion of oxaloacetate (OAA) to phosphoenolpyruvate (PEP) through direct phosphoryl transfer between the nucleoside triphosphate and OAA.</text>
</comment>
<comment type="catalytic activity">
    <reaction evidence="1">
        <text>oxaloacetate + ATP = phosphoenolpyruvate + ADP + CO2</text>
        <dbReference type="Rhea" id="RHEA:18617"/>
        <dbReference type="ChEBI" id="CHEBI:16452"/>
        <dbReference type="ChEBI" id="CHEBI:16526"/>
        <dbReference type="ChEBI" id="CHEBI:30616"/>
        <dbReference type="ChEBI" id="CHEBI:58702"/>
        <dbReference type="ChEBI" id="CHEBI:456216"/>
        <dbReference type="EC" id="4.1.1.49"/>
    </reaction>
</comment>
<comment type="cofactor">
    <cofactor evidence="1">
        <name>Mn(2+)</name>
        <dbReference type="ChEBI" id="CHEBI:29035"/>
    </cofactor>
    <text evidence="1">Binds 1 Mn(2+) ion per subunit.</text>
</comment>
<comment type="pathway">
    <text evidence="1">Carbohydrate biosynthesis; gluconeogenesis.</text>
</comment>
<comment type="subcellular location">
    <subcellularLocation>
        <location evidence="1">Cytoplasm</location>
    </subcellularLocation>
</comment>
<comment type="similarity">
    <text evidence="1">Belongs to the phosphoenolpyruvate carboxykinase (ATP) family.</text>
</comment>
<name>PCKA_CAMJD</name>
<dbReference type="EC" id="4.1.1.49" evidence="1"/>
<dbReference type="EMBL" id="CP000768">
    <property type="protein sequence ID" value="ABS43799.1"/>
    <property type="molecule type" value="Genomic_DNA"/>
</dbReference>
<dbReference type="SMR" id="A7H3B9"/>
<dbReference type="KEGG" id="cjd:JJD26997_0882"/>
<dbReference type="HOGENOM" id="CLU_018247_0_1_7"/>
<dbReference type="UniPathway" id="UPA00138"/>
<dbReference type="Proteomes" id="UP000002302">
    <property type="component" value="Chromosome"/>
</dbReference>
<dbReference type="GO" id="GO:0005829">
    <property type="term" value="C:cytosol"/>
    <property type="evidence" value="ECO:0007669"/>
    <property type="project" value="TreeGrafter"/>
</dbReference>
<dbReference type="GO" id="GO:0005524">
    <property type="term" value="F:ATP binding"/>
    <property type="evidence" value="ECO:0007669"/>
    <property type="project" value="UniProtKB-UniRule"/>
</dbReference>
<dbReference type="GO" id="GO:0046872">
    <property type="term" value="F:metal ion binding"/>
    <property type="evidence" value="ECO:0007669"/>
    <property type="project" value="UniProtKB-KW"/>
</dbReference>
<dbReference type="GO" id="GO:0004612">
    <property type="term" value="F:phosphoenolpyruvate carboxykinase (ATP) activity"/>
    <property type="evidence" value="ECO:0007669"/>
    <property type="project" value="UniProtKB-UniRule"/>
</dbReference>
<dbReference type="GO" id="GO:0006094">
    <property type="term" value="P:gluconeogenesis"/>
    <property type="evidence" value="ECO:0007669"/>
    <property type="project" value="UniProtKB-UniRule"/>
</dbReference>
<dbReference type="CDD" id="cd00484">
    <property type="entry name" value="PEPCK_ATP"/>
    <property type="match status" value="1"/>
</dbReference>
<dbReference type="FunFam" id="2.170.8.10:FF:000001">
    <property type="entry name" value="Phosphoenolpyruvate carboxykinase (ATP)"/>
    <property type="match status" value="1"/>
</dbReference>
<dbReference type="FunFam" id="3.40.449.10:FF:000001">
    <property type="entry name" value="Phosphoenolpyruvate carboxykinase (ATP)"/>
    <property type="match status" value="1"/>
</dbReference>
<dbReference type="Gene3D" id="3.90.228.20">
    <property type="match status" value="1"/>
</dbReference>
<dbReference type="Gene3D" id="3.40.449.10">
    <property type="entry name" value="Phosphoenolpyruvate Carboxykinase, domain 1"/>
    <property type="match status" value="1"/>
</dbReference>
<dbReference type="Gene3D" id="2.170.8.10">
    <property type="entry name" value="Phosphoenolpyruvate Carboxykinase, domain 2"/>
    <property type="match status" value="1"/>
</dbReference>
<dbReference type="HAMAP" id="MF_00453">
    <property type="entry name" value="PEPCK_ATP"/>
    <property type="match status" value="1"/>
</dbReference>
<dbReference type="InterPro" id="IPR001272">
    <property type="entry name" value="PEP_carboxykinase_ATP"/>
</dbReference>
<dbReference type="InterPro" id="IPR013035">
    <property type="entry name" value="PEP_carboxykinase_C"/>
</dbReference>
<dbReference type="InterPro" id="IPR008210">
    <property type="entry name" value="PEP_carboxykinase_N"/>
</dbReference>
<dbReference type="InterPro" id="IPR015994">
    <property type="entry name" value="PEPCK_ATP_CS"/>
</dbReference>
<dbReference type="NCBIfam" id="TIGR00224">
    <property type="entry name" value="pckA"/>
    <property type="match status" value="1"/>
</dbReference>
<dbReference type="NCBIfam" id="NF006819">
    <property type="entry name" value="PRK09344.1-1"/>
    <property type="match status" value="1"/>
</dbReference>
<dbReference type="NCBIfam" id="NF006820">
    <property type="entry name" value="PRK09344.1-2"/>
    <property type="match status" value="1"/>
</dbReference>
<dbReference type="NCBIfam" id="NF006821">
    <property type="entry name" value="PRK09344.1-3"/>
    <property type="match status" value="1"/>
</dbReference>
<dbReference type="PANTHER" id="PTHR30031:SF0">
    <property type="entry name" value="PHOSPHOENOLPYRUVATE CARBOXYKINASE (ATP)"/>
    <property type="match status" value="1"/>
</dbReference>
<dbReference type="PANTHER" id="PTHR30031">
    <property type="entry name" value="PHOSPHOENOLPYRUVATE CARBOXYKINASE ATP"/>
    <property type="match status" value="1"/>
</dbReference>
<dbReference type="Pfam" id="PF01293">
    <property type="entry name" value="PEPCK_ATP"/>
    <property type="match status" value="1"/>
</dbReference>
<dbReference type="PIRSF" id="PIRSF006294">
    <property type="entry name" value="PEP_crbxkin"/>
    <property type="match status" value="1"/>
</dbReference>
<dbReference type="SUPFAM" id="SSF68923">
    <property type="entry name" value="PEP carboxykinase N-terminal domain"/>
    <property type="match status" value="1"/>
</dbReference>
<dbReference type="SUPFAM" id="SSF53795">
    <property type="entry name" value="PEP carboxykinase-like"/>
    <property type="match status" value="1"/>
</dbReference>
<dbReference type="PROSITE" id="PS00532">
    <property type="entry name" value="PEPCK_ATP"/>
    <property type="match status" value="1"/>
</dbReference>
<protein>
    <recommendedName>
        <fullName evidence="1">Phosphoenolpyruvate carboxykinase (ATP)</fullName>
        <shortName evidence="1">PCK</shortName>
        <shortName evidence="1">PEP carboxykinase</shortName>
        <shortName evidence="1">PEPCK</shortName>
        <ecNumber evidence="1">4.1.1.49</ecNumber>
    </recommendedName>
</protein>
<organism>
    <name type="scientific">Campylobacter jejuni subsp. doylei (strain ATCC BAA-1458 / RM4099 / 269.97)</name>
    <dbReference type="NCBI Taxonomy" id="360109"/>
    <lineage>
        <taxon>Bacteria</taxon>
        <taxon>Pseudomonadati</taxon>
        <taxon>Campylobacterota</taxon>
        <taxon>Epsilonproteobacteria</taxon>
        <taxon>Campylobacterales</taxon>
        <taxon>Campylobacteraceae</taxon>
        <taxon>Campylobacter</taxon>
    </lineage>
</organism>
<keyword id="KW-0067">ATP-binding</keyword>
<keyword id="KW-0963">Cytoplasm</keyword>
<keyword id="KW-0210">Decarboxylase</keyword>
<keyword id="KW-0312">Gluconeogenesis</keyword>
<keyword id="KW-0456">Lyase</keyword>
<keyword id="KW-0464">Manganese</keyword>
<keyword id="KW-0479">Metal-binding</keyword>
<keyword id="KW-0547">Nucleotide-binding</keyword>
<feature type="chain" id="PRO_1000026319" description="Phosphoenolpyruvate carboxykinase (ATP)">
    <location>
        <begin position="1"/>
        <end position="524"/>
    </location>
</feature>
<feature type="binding site" evidence="1">
    <location>
        <position position="52"/>
    </location>
    <ligand>
        <name>substrate</name>
    </ligand>
</feature>
<feature type="binding site" evidence="1">
    <location>
        <position position="188"/>
    </location>
    <ligand>
        <name>substrate</name>
    </ligand>
</feature>
<feature type="binding site" evidence="1">
    <location>
        <position position="194"/>
    </location>
    <ligand>
        <name>ATP</name>
        <dbReference type="ChEBI" id="CHEBI:30616"/>
    </ligand>
</feature>
<feature type="binding site" evidence="1">
    <location>
        <position position="194"/>
    </location>
    <ligand>
        <name>Mn(2+)</name>
        <dbReference type="ChEBI" id="CHEBI:29035"/>
    </ligand>
</feature>
<feature type="binding site" evidence="1">
    <location>
        <position position="194"/>
    </location>
    <ligand>
        <name>substrate</name>
    </ligand>
</feature>
<feature type="binding site" evidence="1">
    <location>
        <position position="213"/>
    </location>
    <ligand>
        <name>ATP</name>
        <dbReference type="ChEBI" id="CHEBI:30616"/>
    </ligand>
</feature>
<feature type="binding site" evidence="1">
    <location>
        <position position="213"/>
    </location>
    <ligand>
        <name>Mn(2+)</name>
        <dbReference type="ChEBI" id="CHEBI:29035"/>
    </ligand>
</feature>
<feature type="binding site" evidence="1">
    <location>
        <begin position="229"/>
        <end position="237"/>
    </location>
    <ligand>
        <name>ATP</name>
        <dbReference type="ChEBI" id="CHEBI:30616"/>
    </ligand>
</feature>
<feature type="binding site" evidence="1">
    <location>
        <position position="250"/>
    </location>
    <ligand>
        <name>Mn(2+)</name>
        <dbReference type="ChEBI" id="CHEBI:29035"/>
    </ligand>
</feature>
<feature type="binding site" evidence="1">
    <location>
        <position position="278"/>
    </location>
    <ligand>
        <name>ATP</name>
        <dbReference type="ChEBI" id="CHEBI:30616"/>
    </ligand>
</feature>
<feature type="binding site" evidence="1">
    <location>
        <position position="314"/>
    </location>
    <ligand>
        <name>ATP</name>
        <dbReference type="ChEBI" id="CHEBI:30616"/>
    </ligand>
</feature>
<feature type="binding site" evidence="1">
    <location>
        <position position="314"/>
    </location>
    <ligand>
        <name>substrate</name>
    </ligand>
</feature>
<feature type="binding site" evidence="1">
    <location>
        <position position="439"/>
    </location>
    <ligand>
        <name>ATP</name>
        <dbReference type="ChEBI" id="CHEBI:30616"/>
    </ligand>
</feature>
<gene>
    <name evidence="1" type="primary">pckA</name>
    <name type="ordered locus">JJD26997_0882</name>
</gene>
<accession>A7H3B9</accession>
<evidence type="ECO:0000255" key="1">
    <source>
        <dbReference type="HAMAP-Rule" id="MF_00453"/>
    </source>
</evidence>
<proteinExistence type="inferred from homology"/>
<sequence>MKKFDNLGLDNIKEIFHNLSYDELNAHEKVNNEGLSTDNDTFCVDTGIFTGRSPKDKYFVKQDPSSKYIAWGKVNQPITKELFDKLLTKAKQELSGKKIYVQDAFCGASLQSRKAVRFVTEIAWQAHFVKNMFIRPSQEELENFKADFIVYNACKCINEDYKQDGLNSEVFVIFNVEENIAVIGGTWYGGEMKKGIFSMMNYWLPLENKLSMHCSANVGEKGDVALFFGLSGTGKTTLSTDPKRKLIGDDEHGWDDEGVFNFEGGCYAKTINLDPEHEPEIYGAIKRNALLENVVLRADKSVDYADASKTENTRVSYPIEHIENHEPSLKAGHPKNIIFLSADAFGILPPVSKLSKEQAMYYFLSGYTAKVAGTERGITEPQATFSACFGEPFMPLHPTVYARLLGEKIEKYEVNVYLVNTGWSGGSYGVGKRMSIKATRACINAILDGSITKCEFENFEVFDLAIPKALEGVESTLLNPINTWSDKNAYTETRDKLAHMFVQNFKRYEDVKEGIEFSKFGPKI</sequence>